<keyword id="KW-1015">Disulfide bond</keyword>
<keyword id="KW-0325">Glycoprotein</keyword>
<keyword id="KW-0964">Secreted</keyword>
<keyword id="KW-0732">Signal</keyword>
<comment type="function">
    <text evidence="4">Salivary chemokine-binding protein which binds to host chemokines CCL2, CCL3, CCL4, CCL8 and CCL18.</text>
</comment>
<comment type="subcellular location">
    <subcellularLocation>
        <location evidence="6">Secreted</location>
    </subcellularLocation>
</comment>
<comment type="sequence caution" evidence="6">
    <conflict type="erroneous initiation">
        <sequence resource="EMBL-CDS" id="AEO33551"/>
    </conflict>
    <text>Extended N-terminus.</text>
</comment>
<sequence length="115" mass="12702">MALNWSFRVIFVSTMWCALLKFATLGEPKDDNDYGGGCPFVVLGNGTHAKPAGCSHLCNGAPETLDNIECYNVTEEVAKRMTPGIPYACWLGWCNKGECKRGNRTEVCYRGSEEE</sequence>
<proteinExistence type="inferred from homology"/>
<dbReference type="EMBL" id="JO841934">
    <property type="protein sequence ID" value="AEO33551.1"/>
    <property type="status" value="ALT_INIT"/>
    <property type="molecule type" value="mRNA"/>
</dbReference>
<dbReference type="SMR" id="G3MJ83"/>
<dbReference type="GO" id="GO:0005576">
    <property type="term" value="C:extracellular region"/>
    <property type="evidence" value="ECO:0007669"/>
    <property type="project" value="UniProtKB-SubCell"/>
</dbReference>
<dbReference type="GO" id="GO:0019957">
    <property type="term" value="F:C-C chemokine binding"/>
    <property type="evidence" value="ECO:0000314"/>
    <property type="project" value="UniProtKB"/>
</dbReference>
<dbReference type="Gene3D" id="2.30.130.100">
    <property type="match status" value="1"/>
</dbReference>
<dbReference type="InterPro" id="IPR045797">
    <property type="entry name" value="EVA_Class_A"/>
</dbReference>
<dbReference type="Pfam" id="PF19429">
    <property type="entry name" value="EVA_Class_A"/>
    <property type="match status" value="1"/>
</dbReference>
<evidence type="ECO:0000250" key="1">
    <source>
        <dbReference type="UniProtKB" id="P0C8E7"/>
    </source>
</evidence>
<evidence type="ECO:0000255" key="2"/>
<evidence type="ECO:0000255" key="3">
    <source>
        <dbReference type="PROSITE-ProRule" id="PRU00498"/>
    </source>
</evidence>
<evidence type="ECO:0000269" key="4">
    <source>
    </source>
</evidence>
<evidence type="ECO:0000303" key="5">
    <source>
    </source>
</evidence>
<evidence type="ECO:0000305" key="6"/>
<evidence type="ECO:0000312" key="7">
    <source>
        <dbReference type="EMBL" id="AEO33551.1"/>
    </source>
</evidence>
<protein>
    <recommendedName>
        <fullName evidence="5">Evasin P1182</fullName>
    </recommendedName>
</protein>
<name>E1182_AMBMU</name>
<accession>G3MJ83</accession>
<feature type="signal peptide" evidence="2">
    <location>
        <begin position="1"/>
        <end position="26"/>
    </location>
</feature>
<feature type="chain" id="PRO_0000451308" description="Evasin P1182" evidence="2">
    <location>
        <begin position="27"/>
        <end position="115"/>
    </location>
</feature>
<feature type="glycosylation site" description="N-linked (GlcNAc...) asparagine" evidence="3">
    <location>
        <position position="45"/>
    </location>
</feature>
<feature type="glycosylation site" description="N-linked (GlcNAc...) asparagine" evidence="3">
    <location>
        <position position="72"/>
    </location>
</feature>
<feature type="glycosylation site" description="N-linked (GlcNAc...) asparagine" evidence="3">
    <location>
        <position position="103"/>
    </location>
</feature>
<feature type="disulfide bond" evidence="1">
    <location>
        <begin position="38"/>
        <end position="58"/>
    </location>
</feature>
<feature type="disulfide bond" evidence="1">
    <location>
        <begin position="54"/>
        <end position="94"/>
    </location>
</feature>
<feature type="disulfide bond" evidence="1">
    <location>
        <begin position="70"/>
        <end position="99"/>
    </location>
</feature>
<feature type="disulfide bond" evidence="1">
    <location>
        <begin position="89"/>
        <end position="108"/>
    </location>
</feature>
<reference evidence="7" key="1">
    <citation type="journal article" date="2011" name="PLoS ONE">
        <title>A deep insight into the sialotranscriptome of the gulf coast tick, Amblyomma maculatum.</title>
        <authorList>
            <person name="Karim S."/>
            <person name="Singh P."/>
            <person name="Ribeiro J.M."/>
        </authorList>
    </citation>
    <scope>NUCLEOTIDE SEQUENCE [LARGE SCALE MRNA]</scope>
    <source>
        <tissue evidence="7">Salivary gland</tissue>
    </source>
</reference>
<reference evidence="6" key="2">
    <citation type="journal article" date="2017" name="Sci. Rep.">
        <title>Yeast surface display identifies a family of evasins from ticks with novel polyvalent CC chemokine-binding activities.</title>
        <authorList>
            <person name="Singh K."/>
            <person name="Davies G."/>
            <person name="Alenazi Y."/>
            <person name="Eaton J.R.O."/>
            <person name="Kawamura A."/>
            <person name="Bhattacharya S."/>
        </authorList>
    </citation>
    <scope>FUNCTION</scope>
</reference>
<organism>
    <name type="scientific">Amblyomma maculatum</name>
    <name type="common">Gulf Coast tick</name>
    <dbReference type="NCBI Taxonomy" id="34609"/>
    <lineage>
        <taxon>Eukaryota</taxon>
        <taxon>Metazoa</taxon>
        <taxon>Ecdysozoa</taxon>
        <taxon>Arthropoda</taxon>
        <taxon>Chelicerata</taxon>
        <taxon>Arachnida</taxon>
        <taxon>Acari</taxon>
        <taxon>Parasitiformes</taxon>
        <taxon>Ixodida</taxon>
        <taxon>Ixodoidea</taxon>
        <taxon>Ixodidae</taxon>
        <taxon>Amblyomminae</taxon>
        <taxon>Amblyomma</taxon>
    </lineage>
</organism>